<sequence>MDSALQRVIFFGNEFPSDDLKDLFRRLYQHSKDRRFRLLSAFLEESTTVLKDEIAKLPWPLKELVPPFNSVLDLADVDFRQGPLGAAMESSMLTILELGMFIGHYQAEDVEWDLIPERTLLAGLSIGILAAAAVALSSSLADVSKNGAEAVRVSFRLGIYVADISSKLETPQSDGTLKSWAHVVTEMTQASVQDELNQFNTDTHSPELTKVFISAADKTSVSVSGPPSRVKAAFQHSPILRYSKSLPLPVYDGLCHASHLYTRSDIDAIINCAESVIKPDRSVRLALLSSQTGKPFVAKAASELFLEIGTELLTGTIYLDNVTAGIIEHFKLQSEAATKCRIDSFRTSLVLRGIHSAVEAHFAEEQQQFIRCDLVCWVHKDFGPRQPRSHASSKLAIVGMACRLPGGANDLDLFWKLLEDGRDTLTTVPVDRFDLNTHYDPTGKTENATQTPYGNFIDRPGYFDAGFFNMSPREAEQTDPMQRLALVTAYEAMEMAGVVPGRTPSTHPSRIGTFYGQASDDWRELNASQNISTYAVPGGERAFANGRINYFFKFSGPSFNLDTACSSGLAAVQAACSALWAGEIDTAIAGGLNVITDPDNYCGLGNAHFLSKTGQCKVWDKDADGYCRADGIGSVVIKRLEDAEADNDNILAVVLGACTNHSAEAISITHPHAGAQKANYRQVLHQAGVNPIDVSYIELHGTGTQAGDAVESESVSDIFAPVTPRRRPDQRLHLGAVKSNIGHGEAAAGIASLLKALLVYQKNMIPMHIGIKSEINPTIPKDLERRNVGLAMQNTPWPRVEGKKRLAVVNSFGAHGGNTTLLLEDAPEMVKAQNPEDRITHSVLLSAKSKKSLQANMESLLSYLDQHPETNLADLAYTTSSRRMHHNMRFGTAVSCIPALQKALRSQLDNTNFASEVRPIPNEAPSVVLAFTGQGAYYSGMGRELFSEFPYFRSQVQQLDQLAQRLGFPSVVPVIDGSIEDSSKSTILTQLSVVILEIALARFWSLLGVSISAVIGHSLGEYAALAVAGVISAADAIYLVGRRARLVEERCTLGSHSMLSVRASEDAIQQMLASGPDTAAIEYEVSCCNTNQDTVIGGLKDEINDIRKALEAKSIKCTLLDVPYAFHTAQMDPILDDLEAFAAHVPFNAPSIPVLSPLLATAIFDVKSLNANYLRRAARETVDFAAAIEAAQDMGLVDSKTVWIDVGPHPICAGLVRGMIPSVSVVSSCRRNEDSIATICKSLVTLHLAGLTPCWAEFFKPRECEYSLLHLPKYRWNETNYWIPYIGTWTLDKAHLKHGTKPMTPFSLSMSRPSALRTSLIHQITAETIESTTATLHTISDMQHPDFLEAIQGHTMNKCGVATSSIWSDMAFTVGEYLYRLLMPNVKDVHMNLTDVEVLHAQVASKTRGSIQPLVLQAHLDLSTNSMCLSWFNADGETGECAAESFATATVRFEDPAAWKKEWARLAHLVRGRIEALEQRAVEGKASRLSKPLAYALFKNVVDYADRYRGMDSVVLDELEAMAEVTLVPERHGTWHTPPHWIDSVSHLAGLVMNGSDASNTRDYFFVTPGCDSFRLLNKLEPGAQYRSYVRMFPLLEDPNMHGGDVYILQGEEIVGMVGMIRFRRVPRLLMDRFFSPPTTTSVVGPAPPVVSAATKTHGITQSVPEISAPSPSIVVSDSTANNTLTDKLPVPVPRLASSSESSTPKESPIATPPESESAEPLGNTVSQCLRLMARETGLEVEALTGDASFVQLGVDSLMSLVLSEKFRAELGVEIKSSLFLECPTIGEMTAWIEEYC</sequence>
<protein>
    <recommendedName>
        <fullName evidence="10">Non-reducing polyketide synthase nscA</fullName>
        <ecNumber evidence="11">2.3.1.-</ecNumber>
    </recommendedName>
    <alternativeName>
        <fullName evidence="10">Conidial yellow pigment biosynthesis polyketide synthase nscA</fullName>
    </alternativeName>
    <alternativeName>
        <fullName evidence="10">Neosartoricin B biosynthesis protein A</fullName>
    </alternativeName>
</protein>
<feature type="chain" id="PRO_0000437894" description="Non-reducing polyketide synthase nscA">
    <location>
        <begin position="1"/>
        <end position="1797"/>
    </location>
</feature>
<feature type="domain" description="Ketosynthase family 3 (KS3)" evidence="7">
    <location>
        <begin position="392"/>
        <end position="825"/>
    </location>
</feature>
<feature type="domain" description="PKS/mFAS DH" evidence="8">
    <location>
        <begin position="1322"/>
        <end position="1632"/>
    </location>
</feature>
<feature type="domain" description="Carrier" evidence="6">
    <location>
        <begin position="1720"/>
        <end position="1797"/>
    </location>
</feature>
<feature type="region of interest" description="N-terminal acylcarrier protein transacylase domain (SAT)" evidence="5">
    <location>
        <begin position="17"/>
        <end position="256"/>
    </location>
</feature>
<feature type="region of interest" description="Malonyl-CoA:ACP transacylase (MAT) domain" evidence="5">
    <location>
        <begin position="931"/>
        <end position="1251"/>
    </location>
</feature>
<feature type="region of interest" description="Product template (PT) domain" evidence="5">
    <location>
        <begin position="1318"/>
        <end position="1637"/>
    </location>
</feature>
<feature type="region of interest" description="N-terminal hotdog fold" evidence="8">
    <location>
        <begin position="1322"/>
        <end position="1458"/>
    </location>
</feature>
<feature type="region of interest" description="C-terminal hotdog fold" evidence="8">
    <location>
        <begin position="1482"/>
        <end position="1632"/>
    </location>
</feature>
<feature type="region of interest" description="Disordered" evidence="9">
    <location>
        <begin position="1663"/>
        <end position="1723"/>
    </location>
</feature>
<feature type="compositionally biased region" description="Polar residues" evidence="9">
    <location>
        <begin position="1663"/>
        <end position="1686"/>
    </location>
</feature>
<feature type="compositionally biased region" description="Low complexity" evidence="9">
    <location>
        <begin position="1698"/>
        <end position="1709"/>
    </location>
</feature>
<feature type="active site" description="For beta-ketoacyl synthase activity" evidence="7">
    <location>
        <position position="565"/>
    </location>
</feature>
<feature type="active site" description="For beta-ketoacyl synthase activity" evidence="7">
    <location>
        <position position="700"/>
    </location>
</feature>
<feature type="active site" description="For beta-ketoacyl synthase activity" evidence="7">
    <location>
        <position position="743"/>
    </location>
</feature>
<feature type="active site" description="Proton acceptor; for dehydratase activity" evidence="8">
    <location>
        <position position="1354"/>
    </location>
</feature>
<feature type="active site" description="Proton donor; for dehydratase activity" evidence="8">
    <location>
        <position position="1543"/>
    </location>
</feature>
<feature type="modified residue" description="O-(pantetheine 4'-phosphoryl)serine" evidence="6">
    <location>
        <position position="1757"/>
    </location>
</feature>
<dbReference type="EC" id="2.3.1.-" evidence="11"/>
<dbReference type="EMBL" id="DS989827">
    <property type="protein sequence ID" value="EFR03594.1"/>
    <property type="molecule type" value="Genomic_DNA"/>
</dbReference>
<dbReference type="RefSeq" id="XP_003170602.1">
    <property type="nucleotide sequence ID" value="XM_003170554.1"/>
</dbReference>
<dbReference type="SMR" id="E4V2N2"/>
<dbReference type="STRING" id="535722.E4V2N2"/>
<dbReference type="GeneID" id="10025841"/>
<dbReference type="VEuPathDB" id="FungiDB:MGYG_06588"/>
<dbReference type="eggNOG" id="KOG1202">
    <property type="taxonomic scope" value="Eukaryota"/>
</dbReference>
<dbReference type="HOGENOM" id="CLU_000022_6_1_1"/>
<dbReference type="InParanoid" id="E4V2N2"/>
<dbReference type="OMA" id="LNTHYDP"/>
<dbReference type="OrthoDB" id="329835at2759"/>
<dbReference type="Proteomes" id="UP000002669">
    <property type="component" value="Unassembled WGS sequence"/>
</dbReference>
<dbReference type="GO" id="GO:0004315">
    <property type="term" value="F:3-oxoacyl-[acyl-carrier-protein] synthase activity"/>
    <property type="evidence" value="ECO:0007669"/>
    <property type="project" value="InterPro"/>
</dbReference>
<dbReference type="GO" id="GO:0004312">
    <property type="term" value="F:fatty acid synthase activity"/>
    <property type="evidence" value="ECO:0007669"/>
    <property type="project" value="TreeGrafter"/>
</dbReference>
<dbReference type="GO" id="GO:0031177">
    <property type="term" value="F:phosphopantetheine binding"/>
    <property type="evidence" value="ECO:0007669"/>
    <property type="project" value="InterPro"/>
</dbReference>
<dbReference type="GO" id="GO:0006633">
    <property type="term" value="P:fatty acid biosynthetic process"/>
    <property type="evidence" value="ECO:0007669"/>
    <property type="project" value="InterPro"/>
</dbReference>
<dbReference type="GO" id="GO:0044550">
    <property type="term" value="P:secondary metabolite biosynthetic process"/>
    <property type="evidence" value="ECO:0007669"/>
    <property type="project" value="TreeGrafter"/>
</dbReference>
<dbReference type="CDD" id="cd00833">
    <property type="entry name" value="PKS"/>
    <property type="match status" value="1"/>
</dbReference>
<dbReference type="FunFam" id="3.40.366.10:FF:000017">
    <property type="entry name" value="Non-reducing polyketide synthase aptA"/>
    <property type="match status" value="1"/>
</dbReference>
<dbReference type="FunFam" id="3.40.366.10:FF:000002">
    <property type="entry name" value="Probable polyketide synthase 2"/>
    <property type="match status" value="1"/>
</dbReference>
<dbReference type="FunFam" id="1.10.1200.10:FF:000011">
    <property type="entry name" value="Sterigmatocystin biosynthesis polyketide synthase"/>
    <property type="match status" value="1"/>
</dbReference>
<dbReference type="FunFam" id="3.10.129.110:FF:000001">
    <property type="entry name" value="Sterigmatocystin biosynthesis polyketide synthase"/>
    <property type="match status" value="1"/>
</dbReference>
<dbReference type="FunFam" id="3.40.47.10:FF:000031">
    <property type="entry name" value="Sterigmatocystin biosynthesis polyketide synthase"/>
    <property type="match status" value="1"/>
</dbReference>
<dbReference type="Gene3D" id="3.30.70.3290">
    <property type="match status" value="1"/>
</dbReference>
<dbReference type="Gene3D" id="3.40.47.10">
    <property type="match status" value="1"/>
</dbReference>
<dbReference type="Gene3D" id="1.10.1200.10">
    <property type="entry name" value="ACP-like"/>
    <property type="match status" value="1"/>
</dbReference>
<dbReference type="Gene3D" id="3.40.366.10">
    <property type="entry name" value="Malonyl-Coenzyme A Acyl Carrier Protein, domain 2"/>
    <property type="match status" value="2"/>
</dbReference>
<dbReference type="Gene3D" id="3.10.129.110">
    <property type="entry name" value="Polyketide synthase dehydratase"/>
    <property type="match status" value="1"/>
</dbReference>
<dbReference type="InterPro" id="IPR001227">
    <property type="entry name" value="Ac_transferase_dom_sf"/>
</dbReference>
<dbReference type="InterPro" id="IPR036736">
    <property type="entry name" value="ACP-like_sf"/>
</dbReference>
<dbReference type="InterPro" id="IPR014043">
    <property type="entry name" value="Acyl_transferase_dom"/>
</dbReference>
<dbReference type="InterPro" id="IPR016035">
    <property type="entry name" value="Acyl_Trfase/lysoPLipase"/>
</dbReference>
<dbReference type="InterPro" id="IPR018201">
    <property type="entry name" value="Ketoacyl_synth_AS"/>
</dbReference>
<dbReference type="InterPro" id="IPR014031">
    <property type="entry name" value="Ketoacyl_synth_C"/>
</dbReference>
<dbReference type="InterPro" id="IPR014030">
    <property type="entry name" value="Ketoacyl_synth_N"/>
</dbReference>
<dbReference type="InterPro" id="IPR020841">
    <property type="entry name" value="PKS_Beta-ketoAc_synthase_dom"/>
</dbReference>
<dbReference type="InterPro" id="IPR042104">
    <property type="entry name" value="PKS_dehydratase_sf"/>
</dbReference>
<dbReference type="InterPro" id="IPR049900">
    <property type="entry name" value="PKS_mFAS_DH"/>
</dbReference>
<dbReference type="InterPro" id="IPR050091">
    <property type="entry name" value="PKS_NRPS_Biosynth_Enz"/>
</dbReference>
<dbReference type="InterPro" id="IPR020806">
    <property type="entry name" value="PKS_PP-bd"/>
</dbReference>
<dbReference type="InterPro" id="IPR009081">
    <property type="entry name" value="PP-bd_ACP"/>
</dbReference>
<dbReference type="InterPro" id="IPR030918">
    <property type="entry name" value="PT_fungal_PKS"/>
</dbReference>
<dbReference type="InterPro" id="IPR032088">
    <property type="entry name" value="SAT"/>
</dbReference>
<dbReference type="InterPro" id="IPR016039">
    <property type="entry name" value="Thiolase-like"/>
</dbReference>
<dbReference type="NCBIfam" id="TIGR04532">
    <property type="entry name" value="PT_fungal_PKS"/>
    <property type="match status" value="1"/>
</dbReference>
<dbReference type="PANTHER" id="PTHR43775">
    <property type="entry name" value="FATTY ACID SYNTHASE"/>
    <property type="match status" value="1"/>
</dbReference>
<dbReference type="PANTHER" id="PTHR43775:SF24">
    <property type="entry name" value="NON-REDUCING POLYKETIDE SYNTHASE APTA-RELATED"/>
    <property type="match status" value="1"/>
</dbReference>
<dbReference type="Pfam" id="PF00698">
    <property type="entry name" value="Acyl_transf_1"/>
    <property type="match status" value="1"/>
</dbReference>
<dbReference type="Pfam" id="PF22621">
    <property type="entry name" value="CurL-like_PKS_C"/>
    <property type="match status" value="1"/>
</dbReference>
<dbReference type="Pfam" id="PF00109">
    <property type="entry name" value="ketoacyl-synt"/>
    <property type="match status" value="1"/>
</dbReference>
<dbReference type="Pfam" id="PF02801">
    <property type="entry name" value="Ketoacyl-synt_C"/>
    <property type="match status" value="1"/>
</dbReference>
<dbReference type="Pfam" id="PF00550">
    <property type="entry name" value="PP-binding"/>
    <property type="match status" value="1"/>
</dbReference>
<dbReference type="Pfam" id="PF16073">
    <property type="entry name" value="SAT"/>
    <property type="match status" value="1"/>
</dbReference>
<dbReference type="SMART" id="SM00827">
    <property type="entry name" value="PKS_AT"/>
    <property type="match status" value="1"/>
</dbReference>
<dbReference type="SMART" id="SM00825">
    <property type="entry name" value="PKS_KS"/>
    <property type="match status" value="1"/>
</dbReference>
<dbReference type="SMART" id="SM00823">
    <property type="entry name" value="PKS_PP"/>
    <property type="match status" value="1"/>
</dbReference>
<dbReference type="SUPFAM" id="SSF47336">
    <property type="entry name" value="ACP-like"/>
    <property type="match status" value="1"/>
</dbReference>
<dbReference type="SUPFAM" id="SSF52151">
    <property type="entry name" value="FabD/lysophospholipase-like"/>
    <property type="match status" value="1"/>
</dbReference>
<dbReference type="SUPFAM" id="SSF53901">
    <property type="entry name" value="Thiolase-like"/>
    <property type="match status" value="1"/>
</dbReference>
<dbReference type="PROSITE" id="PS50075">
    <property type="entry name" value="CARRIER"/>
    <property type="match status" value="1"/>
</dbReference>
<dbReference type="PROSITE" id="PS00606">
    <property type="entry name" value="KS3_1"/>
    <property type="match status" value="1"/>
</dbReference>
<dbReference type="PROSITE" id="PS52004">
    <property type="entry name" value="KS3_2"/>
    <property type="match status" value="1"/>
</dbReference>
<dbReference type="PROSITE" id="PS52019">
    <property type="entry name" value="PKS_MFAS_DH"/>
    <property type="match status" value="1"/>
</dbReference>
<reference key="1">
    <citation type="journal article" date="2012" name="MBio">
        <title>Comparative genome analysis of Trichophyton rubrum and related dermatophytes reveals candidate genes involved in infection.</title>
        <authorList>
            <person name="Martinez D.A."/>
            <person name="Oliver B.G."/>
            <person name="Graeser Y."/>
            <person name="Goldberg J.M."/>
            <person name="Li W."/>
            <person name="Martinez-Rossi N.M."/>
            <person name="Monod M."/>
            <person name="Shelest E."/>
            <person name="Barton R.C."/>
            <person name="Birch E."/>
            <person name="Brakhage A.A."/>
            <person name="Chen Z."/>
            <person name="Gurr S.J."/>
            <person name="Heiman D."/>
            <person name="Heitman J."/>
            <person name="Kosti I."/>
            <person name="Rossi A."/>
            <person name="Saif S."/>
            <person name="Samalova M."/>
            <person name="Saunders C.W."/>
            <person name="Shea T."/>
            <person name="Summerbell R.C."/>
            <person name="Xu J."/>
            <person name="Young S."/>
            <person name="Zeng Q."/>
            <person name="Birren B.W."/>
            <person name="Cuomo C.A."/>
            <person name="White T.C."/>
        </authorList>
    </citation>
    <scope>NUCLEOTIDE SEQUENCE [LARGE SCALE GENOMIC DNA]</scope>
    <source>
        <strain>ATCC MYA-4604 / CBS 118893</strain>
    </source>
</reference>
<reference key="2">
    <citation type="journal article" date="2013" name="ACS Synth. Biol.">
        <title>Discovery of cryptic polyketide metabolites from dermatophytes using heterologous expression in Aspergillus nidulans.</title>
        <authorList>
            <person name="Yin W.B."/>
            <person name="Chooi Y.H."/>
            <person name="Smith A.R."/>
            <person name="Cacho R.A."/>
            <person name="Hu Y."/>
            <person name="White T.C."/>
            <person name="Tang Y."/>
        </authorList>
    </citation>
    <scope>FUNCTION</scope>
</reference>
<accession>E4V2N2</accession>
<name>NSCA_ARTGP</name>
<keyword id="KW-0012">Acyltransferase</keyword>
<keyword id="KW-0511">Multifunctional enzyme</keyword>
<keyword id="KW-0596">Phosphopantetheine</keyword>
<keyword id="KW-0597">Phosphoprotein</keyword>
<keyword id="KW-1185">Reference proteome</keyword>
<keyword id="KW-0808">Transferase</keyword>
<comment type="function">
    <text evidence="2 3 11">Non-reducing polyketide synthase; part of the gene cluster that mediates the biosynthesis of neosartoricin B, a prenylated anthracenone that probably exhibits T-cell antiproliferative activity, suggestive of a physiological role as an immunosuppressive agent (PubMed:23758576). The non-reducing polyketide synthase nscA probably synthesizes and cyclizes the decaketide backbone (By similarity). The hydrolase nscB then mediates the product release through hydrolysis followed by spontaneous decarboxylation (By similarity). The prenyltransferase nscD catalyzes the addition of the dimethylallyl group to the aromatic C5 (By similarity). The FAD-dependent monooxygenase nscC is then responsible for the stereospecific hydroxylation at C2 (By similarity). Neosartoricin B can be converted into two additional compounds neosartoricins C and D (By similarity). Neosartoricin C is a spirocyclic compound that is cyclized through the attack of C3 hydroxyl on C14, followed by dehydration (By similarity). On the other hand, neosartoricin D is a further cyclized compound in which attack of C2 on C14 in neosartoricin C results in the formation of the acetal-containing dioxabicyclo-octanone ring (By similarity). Both of these compounds are novel and possibly represent related metabolites of the gene cluster (By similarity).</text>
</comment>
<comment type="cofactor">
    <cofactor evidence="1">
        <name>pantetheine 4'-phosphate</name>
        <dbReference type="ChEBI" id="CHEBI:47942"/>
    </cofactor>
    <text evidence="5">Binds 1 phosphopantetheine covalently.</text>
</comment>
<comment type="pathway">
    <text evidence="11">Secondary metabolite biosynthesis.</text>
</comment>
<comment type="domain">
    <text evidence="4">Multidomain protein; including a starter unit:ACP transacylase (SAT) that selects the starter unit; a ketosynthase (KS) that catalyzes repeated decarboxylative condensation to elongate the polyketide backbone; a malonyl-CoA:ACP transacylase (MAT) that selects and transfers the extender unit malonyl-CoA; a product template (PT) domain that controls the immediate cyclization regioselectivity of the reactive polyketide backbone; and an acyl-carrier protein (ACP) that serves as the tether of the growing and completed polyketide via its phosphopantetheinyl arm (By similarity).</text>
</comment>
<evidence type="ECO:0000250" key="1">
    <source>
        <dbReference type="UniProtKB" id="A0A0K0MCJ4"/>
    </source>
</evidence>
<evidence type="ECO:0000250" key="2">
    <source>
        <dbReference type="UniProtKB" id="A1D8I9"/>
    </source>
</evidence>
<evidence type="ECO:0000250" key="3">
    <source>
        <dbReference type="UniProtKB" id="F2S6Z9"/>
    </source>
</evidence>
<evidence type="ECO:0000250" key="4">
    <source>
        <dbReference type="UniProtKB" id="Q5B0D0"/>
    </source>
</evidence>
<evidence type="ECO:0000255" key="5"/>
<evidence type="ECO:0000255" key="6">
    <source>
        <dbReference type="PROSITE-ProRule" id="PRU00258"/>
    </source>
</evidence>
<evidence type="ECO:0000255" key="7">
    <source>
        <dbReference type="PROSITE-ProRule" id="PRU01348"/>
    </source>
</evidence>
<evidence type="ECO:0000255" key="8">
    <source>
        <dbReference type="PROSITE-ProRule" id="PRU01363"/>
    </source>
</evidence>
<evidence type="ECO:0000256" key="9">
    <source>
        <dbReference type="SAM" id="MobiDB-lite"/>
    </source>
</evidence>
<evidence type="ECO:0000303" key="10">
    <source>
    </source>
</evidence>
<evidence type="ECO:0000305" key="11">
    <source>
    </source>
</evidence>
<proteinExistence type="inferred from homology"/>
<organism>
    <name type="scientific">Arthroderma gypseum (strain ATCC MYA-4604 / CBS 118893)</name>
    <name type="common">Microsporum gypseum</name>
    <dbReference type="NCBI Taxonomy" id="535722"/>
    <lineage>
        <taxon>Eukaryota</taxon>
        <taxon>Fungi</taxon>
        <taxon>Dikarya</taxon>
        <taxon>Ascomycota</taxon>
        <taxon>Pezizomycotina</taxon>
        <taxon>Eurotiomycetes</taxon>
        <taxon>Eurotiomycetidae</taxon>
        <taxon>Onygenales</taxon>
        <taxon>Arthrodermataceae</taxon>
        <taxon>Nannizzia</taxon>
    </lineage>
</organism>
<gene>
    <name evidence="10" type="primary">nscA</name>
    <name type="ORF">MGYG_06588</name>
</gene>